<name>GC_EHV1D</name>
<organismHost>
    <name type="scientific">Equus caballus</name>
    <name type="common">Horse</name>
    <dbReference type="NCBI Taxonomy" id="9796"/>
</organismHost>
<feature type="signal peptide" evidence="2">
    <location>
        <begin position="1"/>
        <end position="30"/>
    </location>
</feature>
<feature type="chain" id="PRO_0000038203" description="Envelope glycoprotein C">
    <location>
        <begin position="31"/>
        <end position="468"/>
    </location>
</feature>
<feature type="topological domain" description="Virion surface" evidence="2">
    <location>
        <begin position="31"/>
        <end position="431"/>
    </location>
</feature>
<feature type="transmembrane region" description="Helical" evidence="2">
    <location>
        <begin position="432"/>
        <end position="451"/>
    </location>
</feature>
<feature type="topological domain" description="Cytoplasmic" evidence="2">
    <location>
        <begin position="452"/>
        <end position="468"/>
    </location>
</feature>
<feature type="domain" description="Ig-like 1">
    <location>
        <begin position="220"/>
        <end position="311"/>
    </location>
</feature>
<feature type="domain" description="Ig-like 2">
    <location>
        <begin position="321"/>
        <end position="416"/>
    </location>
</feature>
<feature type="region of interest" description="Disordered" evidence="4">
    <location>
        <begin position="31"/>
        <end position="73"/>
    </location>
</feature>
<feature type="compositionally biased region" description="Low complexity" evidence="4">
    <location>
        <begin position="31"/>
        <end position="50"/>
    </location>
</feature>
<feature type="glycosylation site" description="N-linked (GlcNAc...) asparagine; by host" evidence="2">
    <location>
        <position position="46"/>
    </location>
</feature>
<feature type="glycosylation site" description="N-linked (GlcNAc...) asparagine; by host" evidence="2">
    <location>
        <position position="57"/>
    </location>
</feature>
<feature type="glycosylation site" description="N-linked (GlcNAc...) asparagine; by host" evidence="2">
    <location>
        <position position="62"/>
    </location>
</feature>
<feature type="glycosylation site" description="N-linked (GlcNAc...) asparagine; by host" evidence="2">
    <location>
        <position position="92"/>
    </location>
</feature>
<feature type="glycosylation site" description="N-linked (GlcNAc...) asparagine; by host" evidence="2">
    <location>
        <position position="100"/>
    </location>
</feature>
<feature type="glycosylation site" description="N-linked (GlcNAc...) asparagine; by host" evidence="2">
    <location>
        <position position="131"/>
    </location>
</feature>
<feature type="glycosylation site" description="N-linked (GlcNAc...) asparagine; by host" evidence="2">
    <location>
        <position position="203"/>
    </location>
</feature>
<feature type="glycosylation site" description="N-linked (GlcNAc...) asparagine; by host" evidence="2">
    <location>
        <position position="208"/>
    </location>
</feature>
<feature type="glycosylation site" description="N-linked (GlcNAc...) asparagine; by host" evidence="2">
    <location>
        <position position="269"/>
    </location>
</feature>
<feature type="disulfide bond" evidence="3">
    <location>
        <begin position="76"/>
        <end position="93"/>
    </location>
</feature>
<feature type="disulfide bond" evidence="3">
    <location>
        <begin position="239"/>
        <end position="301"/>
    </location>
</feature>
<feature type="disulfide bond" evidence="3">
    <location>
        <begin position="340"/>
        <end position="399"/>
    </location>
</feature>
<feature type="disulfide bond" evidence="3">
    <location>
        <begin position="344"/>
        <end position="373"/>
    </location>
</feature>
<feature type="sequence conflict" description="In Ref. 3; AAA46078/AAB25944." evidence="6" ref="3">
    <original>E</original>
    <variation>K</variation>
    <location>
        <position position="107"/>
    </location>
</feature>
<feature type="sequence conflict" description="In Ref. 3; AAA46078/AAB25944." evidence="6" ref="3">
    <original>E</original>
    <variation>K</variation>
    <location>
        <position position="145"/>
    </location>
</feature>
<feature type="sequence conflict" description="In Ref. 3; AAA46078/AAB25944." evidence="6" ref="3">
    <original>V</original>
    <variation>A</variation>
    <location>
        <position position="275"/>
    </location>
</feature>
<evidence type="ECO:0000250" key="1"/>
<evidence type="ECO:0000255" key="2"/>
<evidence type="ECO:0000255" key="3">
    <source>
        <dbReference type="PROSITE-ProRule" id="PRU00114"/>
    </source>
</evidence>
<evidence type="ECO:0000256" key="4">
    <source>
        <dbReference type="SAM" id="MobiDB-lite"/>
    </source>
</evidence>
<evidence type="ECO:0000269" key="5">
    <source>
    </source>
</evidence>
<evidence type="ECO:0000305" key="6"/>
<gene>
    <name type="primary">gC</name>
    <name type="synonym">GP13</name>
</gene>
<organism>
    <name type="scientific">Equine herpesvirus 1 (strain Kentucky D)</name>
    <name type="common">EHV-1</name>
    <name type="synonym">Equine abortion virus</name>
    <dbReference type="NCBI Taxonomy" id="10330"/>
    <lineage>
        <taxon>Viruses</taxon>
        <taxon>Duplodnaviria</taxon>
        <taxon>Heunggongvirae</taxon>
        <taxon>Peploviricota</taxon>
        <taxon>Herviviricetes</taxon>
        <taxon>Herpesvirales</taxon>
        <taxon>Orthoherpesviridae</taxon>
        <taxon>Alphaherpesvirinae</taxon>
        <taxon>Varicellovirus</taxon>
        <taxon>Varicellovirus equidalpha1</taxon>
        <taxon>Equid alphaherpesvirus 1</taxon>
    </lineage>
</organism>
<accession>P68325</accession>
<accession>P12889</accession>
<accession>P36321</accession>
<sequence length="468" mass="50889">MWLPNLVRFVAVAYLICAGAILTYASGASASSSQSTPATPTHTTPNLTTAHGAGSDNTTNANGTESTHSHETTITCTKSLISVPYYKSVDMNCTTSVGVNYSEYRLEIYLNQRTPFSGTPPGDEENYINHNATKDQTLLLFSTAERKKSRRGGQLGVIPDRLPKRQLFNLPLHTEGGTKFPLTIKSVDWRTAGIYVWSLYAKNGTLVNSTSVTVSTYNAPLLDLSVHPSLKGENYRATCVVASYFPHSSVKLRWYKNAREVDFTKYVTNASSVWVDGLITRISTVSIPVDPEEEYTPSLRCSIDWYRDEVSFARIAKAGTPSVFVAPTVSVSVEDGDAVCTAKCVPSTGVFVSWSVNDHLPGVPSQDMTTGVCPSHSGLVNMQSRRPLSEENGEREYSCIIEGYPDGLPMFSDTVVYDASPIVEDRPVLTSIIAVTCGAAALALVVLITAVCFYCSKPSQAPYKKSDF</sequence>
<comment type="function">
    <text evidence="1">Essential for the initial attachment to heparan sulfate moieties of the host cell surface proteoglycans. Also plays a role in host immune evasion by inhibiting the host complement cascade activation (By similarity).</text>
</comment>
<comment type="subunit">
    <text evidence="5">Interacts with host complement component C3; this interaction inhibits host immune response by disregulating complement cascade.</text>
</comment>
<comment type="subcellular location">
    <subcellularLocation>
        <location evidence="6">Virion membrane</location>
        <topology evidence="6">Single-pass membrane protein</topology>
    </subcellularLocation>
</comment>
<comment type="similarity">
    <text evidence="6">Belongs to the herpesviridae glycoprotein C family.</text>
</comment>
<proteinExistence type="evidence at protein level"/>
<dbReference type="EMBL" id="L07272">
    <property type="protein sequence ID" value="AAA46078.1"/>
    <property type="molecule type" value="Genomic_DNA"/>
</dbReference>
<dbReference type="EMBL" id="M19966">
    <property type="protein sequence ID" value="AAA46077.1"/>
    <property type="molecule type" value="Genomic_DNA"/>
</dbReference>
<dbReference type="EMBL" id="M29234">
    <property type="protein sequence ID" value="AAA46085.1"/>
    <property type="molecule type" value="Genomic_DNA"/>
</dbReference>
<dbReference type="EMBL" id="S57839">
    <property type="protein sequence ID" value="AAB25944.1"/>
    <property type="molecule type" value="Genomic_DNA"/>
</dbReference>
<dbReference type="PIR" id="A28149">
    <property type="entry name" value="VGBEEH"/>
</dbReference>
<dbReference type="PIR" id="B46114">
    <property type="entry name" value="B46114"/>
</dbReference>
<dbReference type="GlyCosmos" id="P68325">
    <property type="glycosylation" value="9 sites, No reported glycans"/>
</dbReference>
<dbReference type="KEGG" id="vg:1487561"/>
<dbReference type="GO" id="GO:0016020">
    <property type="term" value="C:membrane"/>
    <property type="evidence" value="ECO:0007669"/>
    <property type="project" value="UniProtKB-KW"/>
</dbReference>
<dbReference type="GO" id="GO:0055036">
    <property type="term" value="C:virion membrane"/>
    <property type="evidence" value="ECO:0007669"/>
    <property type="project" value="UniProtKB-SubCell"/>
</dbReference>
<dbReference type="GO" id="GO:0098671">
    <property type="term" value="P:adhesion receptor-mediated virion attachment to host cell"/>
    <property type="evidence" value="ECO:0007669"/>
    <property type="project" value="UniProtKB-KW"/>
</dbReference>
<dbReference type="GO" id="GO:0046718">
    <property type="term" value="P:symbiont entry into host cell"/>
    <property type="evidence" value="ECO:0007669"/>
    <property type="project" value="UniProtKB-KW"/>
</dbReference>
<dbReference type="GO" id="GO:0042784">
    <property type="term" value="P:symbiont-mediated suppression of host complement activation"/>
    <property type="evidence" value="ECO:0007669"/>
    <property type="project" value="UniProtKB-KW"/>
</dbReference>
<dbReference type="InterPro" id="IPR001038">
    <property type="entry name" value="GA_GC"/>
</dbReference>
<dbReference type="InterPro" id="IPR007110">
    <property type="entry name" value="Ig-like_dom"/>
</dbReference>
<dbReference type="InterPro" id="IPR036179">
    <property type="entry name" value="Ig-like_dom_sf"/>
</dbReference>
<dbReference type="Pfam" id="PF02124">
    <property type="entry name" value="Marek_A"/>
    <property type="match status" value="1"/>
</dbReference>
<dbReference type="PRINTS" id="PR00668">
    <property type="entry name" value="GLYCPROTEINC"/>
</dbReference>
<dbReference type="SUPFAM" id="SSF48726">
    <property type="entry name" value="Immunoglobulin"/>
    <property type="match status" value="1"/>
</dbReference>
<dbReference type="PROSITE" id="PS50835">
    <property type="entry name" value="IG_LIKE"/>
    <property type="match status" value="2"/>
</dbReference>
<reference key="1">
    <citation type="journal article" date="1988" name="J. Virol.">
        <title>Characterization of an equine herpesvirus type 1 gene encoding a glycoprotein (gp13) with homology to herpes simplex virus glycoprotein C.</title>
        <authorList>
            <person name="Allen G.P."/>
            <person name="Coogle L.D."/>
        </authorList>
    </citation>
    <scope>NUCLEOTIDE SEQUENCE [GENOMIC DNA]</scope>
</reference>
<reference key="2">
    <citation type="journal article" date="1989" name="J. Virol.">
        <title>Expression in recombinant vaccinia virus of the equine herpesvirus 1 gene encoding glycoprotein gp13 and protection of immunized animals.</title>
        <authorList>
            <person name="Guo P."/>
            <person name="Goebel S.J."/>
            <person name="Davis S."/>
            <person name="Perkus M.E."/>
            <person name="Languet B."/>
            <person name="Desmettre P."/>
            <person name="Allen G."/>
            <person name="Paoletti E."/>
        </authorList>
    </citation>
    <scope>NUCLEOTIDE SEQUENCE [GENOMIC DNA]</scope>
</reference>
<reference key="3">
    <citation type="journal article" date="1993" name="Virology">
        <title>DNA sequence and transcriptional analyses of the region of the equine herpesvirus type 1 Kentucky A strain genome encoding glycoprotein C.</title>
        <authorList>
            <person name="Matsumura T."/>
            <person name="Smith R.H."/>
            <person name="O'Callaghan D.J."/>
        </authorList>
    </citation>
    <scope>NUCLEOTIDE SEQUENCE [GENOMIC DNA]</scope>
</reference>
<reference key="4">
    <citation type="journal article" date="1995" name="Virus Res.">
        <title>gp13 (EHV-gC): a complement receptor induced by equine herpesviruses.</title>
        <authorList>
            <person name="Huemer H.P."/>
            <person name="Nowotny N."/>
            <person name="Crabb B.S."/>
            <person name="Meyer H."/>
            <person name="Hubert P.H."/>
        </authorList>
    </citation>
    <scope>INTERACTION WITH HOST C3</scope>
</reference>
<protein>
    <recommendedName>
        <fullName>Envelope glycoprotein C</fullName>
        <shortName>gC</shortName>
    </recommendedName>
    <alternativeName>
        <fullName>Glycoprotein 13</fullName>
    </alternativeName>
</protein>
<keyword id="KW-1015">Disulfide bond</keyword>
<keyword id="KW-0325">Glycoprotein</keyword>
<keyword id="KW-0945">Host-virus interaction</keyword>
<keyword id="KW-0393">Immunoglobulin domain</keyword>
<keyword id="KW-1087">Inhibition of host complement factors by virus</keyword>
<keyword id="KW-0472">Membrane</keyword>
<keyword id="KW-0677">Repeat</keyword>
<keyword id="KW-0732">Signal</keyword>
<keyword id="KW-0812">Transmembrane</keyword>
<keyword id="KW-1133">Transmembrane helix</keyword>
<keyword id="KW-1233">Viral attachment to host adhesion receptor</keyword>
<keyword id="KW-1161">Viral attachment to host cell</keyword>
<keyword id="KW-0899">Viral immunoevasion</keyword>
<keyword id="KW-0946">Virion</keyword>
<keyword id="KW-1160">Virus entry into host cell</keyword>